<proteinExistence type="inferred from homology"/>
<dbReference type="EC" id="2.7.1.71" evidence="1"/>
<dbReference type="EMBL" id="BA000003">
    <property type="protein sequence ID" value="BAB13232.1"/>
    <property type="molecule type" value="Genomic_DNA"/>
</dbReference>
<dbReference type="RefSeq" id="NP_240346.1">
    <property type="nucleotide sequence ID" value="NC_002528.1"/>
</dbReference>
<dbReference type="RefSeq" id="WP_009874490.1">
    <property type="nucleotide sequence ID" value="NZ_AP036055.1"/>
</dbReference>
<dbReference type="SMR" id="P57605"/>
<dbReference type="STRING" id="563178.BUAP5A_532"/>
<dbReference type="EnsemblBacteria" id="BAB13232">
    <property type="protein sequence ID" value="BAB13232"/>
    <property type="gene ID" value="BAB13232"/>
</dbReference>
<dbReference type="KEGG" id="buc:BU539"/>
<dbReference type="PATRIC" id="fig|107806.10.peg.544"/>
<dbReference type="eggNOG" id="COG0703">
    <property type="taxonomic scope" value="Bacteria"/>
</dbReference>
<dbReference type="HOGENOM" id="CLU_057607_2_2_6"/>
<dbReference type="UniPathway" id="UPA00053">
    <property type="reaction ID" value="UER00088"/>
</dbReference>
<dbReference type="Proteomes" id="UP000001806">
    <property type="component" value="Chromosome"/>
</dbReference>
<dbReference type="GO" id="GO:0005829">
    <property type="term" value="C:cytosol"/>
    <property type="evidence" value="ECO:0007669"/>
    <property type="project" value="TreeGrafter"/>
</dbReference>
<dbReference type="GO" id="GO:0005524">
    <property type="term" value="F:ATP binding"/>
    <property type="evidence" value="ECO:0007669"/>
    <property type="project" value="UniProtKB-UniRule"/>
</dbReference>
<dbReference type="GO" id="GO:0000287">
    <property type="term" value="F:magnesium ion binding"/>
    <property type="evidence" value="ECO:0007669"/>
    <property type="project" value="UniProtKB-UniRule"/>
</dbReference>
<dbReference type="GO" id="GO:0004765">
    <property type="term" value="F:shikimate kinase activity"/>
    <property type="evidence" value="ECO:0007669"/>
    <property type="project" value="UniProtKB-UniRule"/>
</dbReference>
<dbReference type="GO" id="GO:0008652">
    <property type="term" value="P:amino acid biosynthetic process"/>
    <property type="evidence" value="ECO:0007669"/>
    <property type="project" value="UniProtKB-KW"/>
</dbReference>
<dbReference type="GO" id="GO:0009073">
    <property type="term" value="P:aromatic amino acid family biosynthetic process"/>
    <property type="evidence" value="ECO:0007669"/>
    <property type="project" value="UniProtKB-KW"/>
</dbReference>
<dbReference type="GO" id="GO:0009423">
    <property type="term" value="P:chorismate biosynthetic process"/>
    <property type="evidence" value="ECO:0007669"/>
    <property type="project" value="UniProtKB-UniRule"/>
</dbReference>
<dbReference type="CDD" id="cd00464">
    <property type="entry name" value="SK"/>
    <property type="match status" value="1"/>
</dbReference>
<dbReference type="FunFam" id="3.40.50.300:FF:000099">
    <property type="entry name" value="Shikimate kinase 1"/>
    <property type="match status" value="1"/>
</dbReference>
<dbReference type="Gene3D" id="3.40.50.300">
    <property type="entry name" value="P-loop containing nucleotide triphosphate hydrolases"/>
    <property type="match status" value="1"/>
</dbReference>
<dbReference type="HAMAP" id="MF_00109">
    <property type="entry name" value="Shikimate_kinase"/>
    <property type="match status" value="1"/>
</dbReference>
<dbReference type="InterPro" id="IPR027417">
    <property type="entry name" value="P-loop_NTPase"/>
</dbReference>
<dbReference type="InterPro" id="IPR031322">
    <property type="entry name" value="Shikimate/glucono_kinase"/>
</dbReference>
<dbReference type="InterPro" id="IPR000623">
    <property type="entry name" value="Shikimate_kinase/TSH1"/>
</dbReference>
<dbReference type="InterPro" id="IPR023000">
    <property type="entry name" value="Shikimate_kinase_CS"/>
</dbReference>
<dbReference type="NCBIfam" id="NF003456">
    <property type="entry name" value="PRK05057.1"/>
    <property type="match status" value="1"/>
</dbReference>
<dbReference type="PANTHER" id="PTHR21087">
    <property type="entry name" value="SHIKIMATE KINASE"/>
    <property type="match status" value="1"/>
</dbReference>
<dbReference type="PANTHER" id="PTHR21087:SF16">
    <property type="entry name" value="SHIKIMATE KINASE 1, CHLOROPLASTIC"/>
    <property type="match status" value="1"/>
</dbReference>
<dbReference type="Pfam" id="PF01202">
    <property type="entry name" value="SKI"/>
    <property type="match status" value="1"/>
</dbReference>
<dbReference type="PRINTS" id="PR01100">
    <property type="entry name" value="SHIKIMTKNASE"/>
</dbReference>
<dbReference type="SUPFAM" id="SSF52540">
    <property type="entry name" value="P-loop containing nucleoside triphosphate hydrolases"/>
    <property type="match status" value="1"/>
</dbReference>
<dbReference type="PROSITE" id="PS01128">
    <property type="entry name" value="SHIKIMATE_KINASE"/>
    <property type="match status" value="1"/>
</dbReference>
<organism>
    <name type="scientific">Buchnera aphidicola subsp. Acyrthosiphon pisum (strain APS)</name>
    <name type="common">Acyrthosiphon pisum symbiotic bacterium</name>
    <dbReference type="NCBI Taxonomy" id="107806"/>
    <lineage>
        <taxon>Bacteria</taxon>
        <taxon>Pseudomonadati</taxon>
        <taxon>Pseudomonadota</taxon>
        <taxon>Gammaproteobacteria</taxon>
        <taxon>Enterobacterales</taxon>
        <taxon>Erwiniaceae</taxon>
        <taxon>Buchnera</taxon>
    </lineage>
</organism>
<protein>
    <recommendedName>
        <fullName evidence="1">Shikimate kinase</fullName>
        <shortName evidence="1">SK</shortName>
        <ecNumber evidence="1">2.7.1.71</ecNumber>
    </recommendedName>
</protein>
<reference key="1">
    <citation type="journal article" date="2000" name="Nature">
        <title>Genome sequence of the endocellular bacterial symbiont of aphids Buchnera sp. APS.</title>
        <authorList>
            <person name="Shigenobu S."/>
            <person name="Watanabe H."/>
            <person name="Hattori M."/>
            <person name="Sakaki Y."/>
            <person name="Ishikawa H."/>
        </authorList>
    </citation>
    <scope>NUCLEOTIDE SEQUENCE [LARGE SCALE GENOMIC DNA]</scope>
    <source>
        <strain>APS</strain>
    </source>
</reference>
<accession>P57605</accession>
<evidence type="ECO:0000255" key="1">
    <source>
        <dbReference type="HAMAP-Rule" id="MF_00109"/>
    </source>
</evidence>
<keyword id="KW-0028">Amino-acid biosynthesis</keyword>
<keyword id="KW-0057">Aromatic amino acid biosynthesis</keyword>
<keyword id="KW-0067">ATP-binding</keyword>
<keyword id="KW-0963">Cytoplasm</keyword>
<keyword id="KW-0418">Kinase</keyword>
<keyword id="KW-0460">Magnesium</keyword>
<keyword id="KW-0479">Metal-binding</keyword>
<keyword id="KW-0547">Nucleotide-binding</keyword>
<keyword id="KW-1185">Reference proteome</keyword>
<keyword id="KW-0808">Transferase</keyword>
<name>AROK_BUCAI</name>
<comment type="function">
    <text evidence="1">Catalyzes the specific phosphorylation of the 3-hydroxyl group of shikimic acid using ATP as a cosubstrate.</text>
</comment>
<comment type="catalytic activity">
    <reaction evidence="1">
        <text>shikimate + ATP = 3-phosphoshikimate + ADP + H(+)</text>
        <dbReference type="Rhea" id="RHEA:13121"/>
        <dbReference type="ChEBI" id="CHEBI:15378"/>
        <dbReference type="ChEBI" id="CHEBI:30616"/>
        <dbReference type="ChEBI" id="CHEBI:36208"/>
        <dbReference type="ChEBI" id="CHEBI:145989"/>
        <dbReference type="ChEBI" id="CHEBI:456216"/>
        <dbReference type="EC" id="2.7.1.71"/>
    </reaction>
</comment>
<comment type="cofactor">
    <cofactor evidence="1">
        <name>Mg(2+)</name>
        <dbReference type="ChEBI" id="CHEBI:18420"/>
    </cofactor>
    <text evidence="1">Binds 1 Mg(2+) ion per subunit.</text>
</comment>
<comment type="pathway">
    <text evidence="1">Metabolic intermediate biosynthesis; chorismate biosynthesis; chorismate from D-erythrose 4-phosphate and phosphoenolpyruvate: step 5/7.</text>
</comment>
<comment type="subunit">
    <text evidence="1">Monomer.</text>
</comment>
<comment type="subcellular location">
    <subcellularLocation>
        <location evidence="1">Cytoplasm</location>
    </subcellularLocation>
</comment>
<comment type="similarity">
    <text evidence="1">Belongs to the shikimate kinase family.</text>
</comment>
<gene>
    <name evidence="1" type="primary">aroK</name>
    <name type="ordered locus">BU539</name>
</gene>
<sequence length="173" mass="19764">MAEKRNIFLVGPMGAGKSTIGRQLSQQLNMEFFDSDQEIEKRTGADISWVFDVEGESGFRLREQRVIDELTTKQGIVLATGGGSVKFRETRNFLSSRGIVVYLETTIEKQLARTKRDKKRPLLQNADSNRMILENLAYERNPFYEEIADIKVKTDDQSAKSVAFNIIRLLEEI</sequence>
<feature type="chain" id="PRO_0000192369" description="Shikimate kinase">
    <location>
        <begin position="1"/>
        <end position="173"/>
    </location>
</feature>
<feature type="binding site" evidence="1">
    <location>
        <begin position="14"/>
        <end position="19"/>
    </location>
    <ligand>
        <name>ATP</name>
        <dbReference type="ChEBI" id="CHEBI:30616"/>
    </ligand>
</feature>
<feature type="binding site" evidence="1">
    <location>
        <position position="18"/>
    </location>
    <ligand>
        <name>Mg(2+)</name>
        <dbReference type="ChEBI" id="CHEBI:18420"/>
    </ligand>
</feature>
<feature type="binding site" evidence="1">
    <location>
        <position position="36"/>
    </location>
    <ligand>
        <name>substrate</name>
    </ligand>
</feature>
<feature type="binding site" evidence="1">
    <location>
        <position position="60"/>
    </location>
    <ligand>
        <name>substrate</name>
    </ligand>
</feature>
<feature type="binding site" evidence="1">
    <location>
        <position position="82"/>
    </location>
    <ligand>
        <name>substrate</name>
    </ligand>
</feature>
<feature type="binding site" evidence="1">
    <location>
        <position position="120"/>
    </location>
    <ligand>
        <name>ATP</name>
        <dbReference type="ChEBI" id="CHEBI:30616"/>
    </ligand>
</feature>
<feature type="binding site" evidence="1">
    <location>
        <position position="140"/>
    </location>
    <ligand>
        <name>substrate</name>
    </ligand>
</feature>
<feature type="binding site" evidence="1">
    <location>
        <position position="157"/>
    </location>
    <ligand>
        <name>ATP</name>
        <dbReference type="ChEBI" id="CHEBI:30616"/>
    </ligand>
</feature>